<organism>
    <name type="scientific">Mycoplasmopsis agalactiae (strain NCTC 10123 / CIP 59.7 / PG2)</name>
    <name type="common">Mycoplasma agalactiae</name>
    <dbReference type="NCBI Taxonomy" id="347257"/>
    <lineage>
        <taxon>Bacteria</taxon>
        <taxon>Bacillati</taxon>
        <taxon>Mycoplasmatota</taxon>
        <taxon>Mycoplasmoidales</taxon>
        <taxon>Metamycoplasmataceae</taxon>
        <taxon>Mycoplasmopsis</taxon>
    </lineage>
</organism>
<dbReference type="EMBL" id="CU179680">
    <property type="protein sequence ID" value="CAL59232.1"/>
    <property type="molecule type" value="Genomic_DNA"/>
</dbReference>
<dbReference type="RefSeq" id="WP_004023947.1">
    <property type="nucleotide sequence ID" value="NC_009497.1"/>
</dbReference>
<dbReference type="SMR" id="A5IYX3"/>
<dbReference type="STRING" id="347257.MAG5340"/>
<dbReference type="GeneID" id="93358277"/>
<dbReference type="KEGG" id="maa:MAG5340"/>
<dbReference type="HOGENOM" id="CLU_139869_3_0_14"/>
<dbReference type="Proteomes" id="UP000007065">
    <property type="component" value="Chromosome"/>
</dbReference>
<dbReference type="GO" id="GO:0005737">
    <property type="term" value="C:cytoplasm"/>
    <property type="evidence" value="ECO:0007669"/>
    <property type="project" value="UniProtKB-ARBA"/>
</dbReference>
<dbReference type="GO" id="GO:0015935">
    <property type="term" value="C:small ribosomal subunit"/>
    <property type="evidence" value="ECO:0007669"/>
    <property type="project" value="TreeGrafter"/>
</dbReference>
<dbReference type="GO" id="GO:0019843">
    <property type="term" value="F:rRNA binding"/>
    <property type="evidence" value="ECO:0007669"/>
    <property type="project" value="UniProtKB-UniRule"/>
</dbReference>
<dbReference type="GO" id="GO:0003735">
    <property type="term" value="F:structural constituent of ribosome"/>
    <property type="evidence" value="ECO:0007669"/>
    <property type="project" value="InterPro"/>
</dbReference>
<dbReference type="GO" id="GO:0008270">
    <property type="term" value="F:zinc ion binding"/>
    <property type="evidence" value="ECO:0007669"/>
    <property type="project" value="UniProtKB-UniRule"/>
</dbReference>
<dbReference type="GO" id="GO:0006412">
    <property type="term" value="P:translation"/>
    <property type="evidence" value="ECO:0007669"/>
    <property type="project" value="UniProtKB-UniRule"/>
</dbReference>
<dbReference type="FunFam" id="4.10.830.10:FF:000001">
    <property type="entry name" value="30S ribosomal protein S14 type Z"/>
    <property type="match status" value="1"/>
</dbReference>
<dbReference type="Gene3D" id="4.10.830.10">
    <property type="entry name" value="30s Ribosomal Protein S14, Chain N"/>
    <property type="match status" value="1"/>
</dbReference>
<dbReference type="HAMAP" id="MF_01364_B">
    <property type="entry name" value="Ribosomal_uS14_2_B"/>
    <property type="match status" value="1"/>
</dbReference>
<dbReference type="InterPro" id="IPR001209">
    <property type="entry name" value="Ribosomal_uS14"/>
</dbReference>
<dbReference type="InterPro" id="IPR023053">
    <property type="entry name" value="Ribosomal_uS14_bact"/>
</dbReference>
<dbReference type="InterPro" id="IPR043140">
    <property type="entry name" value="Ribosomal_uS14_sf"/>
</dbReference>
<dbReference type="NCBIfam" id="NF005974">
    <property type="entry name" value="PRK08061.1"/>
    <property type="match status" value="1"/>
</dbReference>
<dbReference type="PANTHER" id="PTHR19836">
    <property type="entry name" value="30S RIBOSOMAL PROTEIN S14"/>
    <property type="match status" value="1"/>
</dbReference>
<dbReference type="PANTHER" id="PTHR19836:SF19">
    <property type="entry name" value="SMALL RIBOSOMAL SUBUNIT PROTEIN US14M"/>
    <property type="match status" value="1"/>
</dbReference>
<dbReference type="Pfam" id="PF00253">
    <property type="entry name" value="Ribosomal_S14"/>
    <property type="match status" value="1"/>
</dbReference>
<dbReference type="SUPFAM" id="SSF57716">
    <property type="entry name" value="Glucocorticoid receptor-like (DNA-binding domain)"/>
    <property type="match status" value="1"/>
</dbReference>
<reference key="1">
    <citation type="journal article" date="2007" name="PLoS Genet.">
        <title>Being pathogenic, plastic, and sexual while living with a nearly minimal bacterial genome.</title>
        <authorList>
            <person name="Sirand-Pugnet P."/>
            <person name="Lartigue C."/>
            <person name="Marenda M."/>
            <person name="Jacob D."/>
            <person name="Barre A."/>
            <person name="Barbe V."/>
            <person name="Schenowitz C."/>
            <person name="Mangenot S."/>
            <person name="Couloux A."/>
            <person name="Segurens B."/>
            <person name="de Daruvar A."/>
            <person name="Blanchard A."/>
            <person name="Citti C."/>
        </authorList>
    </citation>
    <scope>NUCLEOTIDE SEQUENCE [LARGE SCALE GENOMIC DNA]</scope>
    <source>
        <strain>NCTC 10123 / CIP 59.7 / PG2</strain>
    </source>
</reference>
<proteinExistence type="inferred from homology"/>
<name>RS14Z_MYCAP</name>
<gene>
    <name evidence="1" type="primary">rpsZ</name>
    <name evidence="1" type="synonym">rpsN</name>
    <name type="ordered locus">MAG5340</name>
</gene>
<feature type="chain" id="PRO_1000143915" description="Small ribosomal subunit protein uS14">
    <location>
        <begin position="1"/>
        <end position="61"/>
    </location>
</feature>
<feature type="binding site" evidence="1">
    <location>
        <position position="24"/>
    </location>
    <ligand>
        <name>Zn(2+)</name>
        <dbReference type="ChEBI" id="CHEBI:29105"/>
    </ligand>
</feature>
<feature type="binding site" evidence="1">
    <location>
        <position position="27"/>
    </location>
    <ligand>
        <name>Zn(2+)</name>
        <dbReference type="ChEBI" id="CHEBI:29105"/>
    </ligand>
</feature>
<feature type="binding site" evidence="1">
    <location>
        <position position="40"/>
    </location>
    <ligand>
        <name>Zn(2+)</name>
        <dbReference type="ChEBI" id="CHEBI:29105"/>
    </ligand>
</feature>
<feature type="binding site" evidence="1">
    <location>
        <position position="43"/>
    </location>
    <ligand>
        <name>Zn(2+)</name>
        <dbReference type="ChEBI" id="CHEBI:29105"/>
    </ligand>
</feature>
<accession>A5IYX3</accession>
<protein>
    <recommendedName>
        <fullName evidence="1">Small ribosomal subunit protein uS14</fullName>
    </recommendedName>
    <alternativeName>
        <fullName evidence="2">30S ribosomal protein S14 type Z</fullName>
    </alternativeName>
</protein>
<evidence type="ECO:0000255" key="1">
    <source>
        <dbReference type="HAMAP-Rule" id="MF_01364"/>
    </source>
</evidence>
<evidence type="ECO:0000305" key="2"/>
<sequence>MAKSSLKAKQKKHAKFSTRAYTRCELCGRVHAVLRKYKICRICFRELAHQGKIPGMKKASW</sequence>
<keyword id="KW-0479">Metal-binding</keyword>
<keyword id="KW-1185">Reference proteome</keyword>
<keyword id="KW-0687">Ribonucleoprotein</keyword>
<keyword id="KW-0689">Ribosomal protein</keyword>
<keyword id="KW-0694">RNA-binding</keyword>
<keyword id="KW-0699">rRNA-binding</keyword>
<keyword id="KW-0862">Zinc</keyword>
<comment type="function">
    <text evidence="1">Binds 16S rRNA, required for the assembly of 30S particles and may also be responsible for determining the conformation of the 16S rRNA at the A site.</text>
</comment>
<comment type="cofactor">
    <cofactor evidence="1">
        <name>Zn(2+)</name>
        <dbReference type="ChEBI" id="CHEBI:29105"/>
    </cofactor>
    <text evidence="1">Binds 1 zinc ion per subunit.</text>
</comment>
<comment type="subunit">
    <text evidence="1">Part of the 30S ribosomal subunit. Contacts proteins S3 and S10.</text>
</comment>
<comment type="similarity">
    <text evidence="1">Belongs to the universal ribosomal protein uS14 family. Zinc-binding uS14 subfamily.</text>
</comment>